<comment type="similarity">
    <text evidence="1">Belongs to the bacterial ribosomal protein bS21 family.</text>
</comment>
<evidence type="ECO:0000255" key="1">
    <source>
        <dbReference type="HAMAP-Rule" id="MF_00358"/>
    </source>
</evidence>
<evidence type="ECO:0000305" key="2"/>
<dbReference type="EMBL" id="CP000764">
    <property type="protein sequence ID" value="ABS23261.1"/>
    <property type="molecule type" value="Genomic_DNA"/>
</dbReference>
<dbReference type="RefSeq" id="WP_012095498.1">
    <property type="nucleotide sequence ID" value="NC_009674.1"/>
</dbReference>
<dbReference type="SMR" id="A7GT03"/>
<dbReference type="STRING" id="315749.Bcer98_3035"/>
<dbReference type="GeneID" id="33898281"/>
<dbReference type="KEGG" id="bcy:Bcer98_3035"/>
<dbReference type="eggNOG" id="COG0828">
    <property type="taxonomic scope" value="Bacteria"/>
</dbReference>
<dbReference type="HOGENOM" id="CLU_159258_3_2_9"/>
<dbReference type="OrthoDB" id="9799244at2"/>
<dbReference type="Proteomes" id="UP000002300">
    <property type="component" value="Chromosome"/>
</dbReference>
<dbReference type="GO" id="GO:1990904">
    <property type="term" value="C:ribonucleoprotein complex"/>
    <property type="evidence" value="ECO:0007669"/>
    <property type="project" value="UniProtKB-KW"/>
</dbReference>
<dbReference type="GO" id="GO:0005840">
    <property type="term" value="C:ribosome"/>
    <property type="evidence" value="ECO:0007669"/>
    <property type="project" value="UniProtKB-KW"/>
</dbReference>
<dbReference type="GO" id="GO:0003735">
    <property type="term" value="F:structural constituent of ribosome"/>
    <property type="evidence" value="ECO:0007669"/>
    <property type="project" value="InterPro"/>
</dbReference>
<dbReference type="GO" id="GO:0006412">
    <property type="term" value="P:translation"/>
    <property type="evidence" value="ECO:0007669"/>
    <property type="project" value="UniProtKB-UniRule"/>
</dbReference>
<dbReference type="Gene3D" id="1.20.5.1150">
    <property type="entry name" value="Ribosomal protein S8"/>
    <property type="match status" value="1"/>
</dbReference>
<dbReference type="HAMAP" id="MF_00358">
    <property type="entry name" value="Ribosomal_bS21"/>
    <property type="match status" value="1"/>
</dbReference>
<dbReference type="InterPro" id="IPR001911">
    <property type="entry name" value="Ribosomal_bS21"/>
</dbReference>
<dbReference type="InterPro" id="IPR018278">
    <property type="entry name" value="Ribosomal_bS21_CS"/>
</dbReference>
<dbReference type="InterPro" id="IPR038380">
    <property type="entry name" value="Ribosomal_bS21_sf"/>
</dbReference>
<dbReference type="NCBIfam" id="TIGR00030">
    <property type="entry name" value="S21p"/>
    <property type="match status" value="1"/>
</dbReference>
<dbReference type="PANTHER" id="PTHR21109">
    <property type="entry name" value="MITOCHONDRIAL 28S RIBOSOMAL PROTEIN S21"/>
    <property type="match status" value="1"/>
</dbReference>
<dbReference type="PANTHER" id="PTHR21109:SF22">
    <property type="entry name" value="SMALL RIBOSOMAL SUBUNIT PROTEIN BS21"/>
    <property type="match status" value="1"/>
</dbReference>
<dbReference type="Pfam" id="PF01165">
    <property type="entry name" value="Ribosomal_S21"/>
    <property type="match status" value="1"/>
</dbReference>
<dbReference type="PRINTS" id="PR00976">
    <property type="entry name" value="RIBOSOMALS21"/>
</dbReference>
<dbReference type="PROSITE" id="PS01181">
    <property type="entry name" value="RIBOSOMAL_S21"/>
    <property type="match status" value="1"/>
</dbReference>
<sequence length="57" mass="6787">MSKTIVRKNESLEDALRRFKRSVSKTGTLAEARKREFYEKPSVKRKKKSEAARKRKF</sequence>
<keyword id="KW-0687">Ribonucleoprotein</keyword>
<keyword id="KW-0689">Ribosomal protein</keyword>
<organism>
    <name type="scientific">Bacillus cytotoxicus (strain DSM 22905 / CIP 110041 / 391-98 / NVH 391-98)</name>
    <dbReference type="NCBI Taxonomy" id="315749"/>
    <lineage>
        <taxon>Bacteria</taxon>
        <taxon>Bacillati</taxon>
        <taxon>Bacillota</taxon>
        <taxon>Bacilli</taxon>
        <taxon>Bacillales</taxon>
        <taxon>Bacillaceae</taxon>
        <taxon>Bacillus</taxon>
        <taxon>Bacillus cereus group</taxon>
    </lineage>
</organism>
<reference key="1">
    <citation type="journal article" date="2008" name="Chem. Biol. Interact.">
        <title>Extending the Bacillus cereus group genomics to putative food-borne pathogens of different toxicity.</title>
        <authorList>
            <person name="Lapidus A."/>
            <person name="Goltsman E."/>
            <person name="Auger S."/>
            <person name="Galleron N."/>
            <person name="Segurens B."/>
            <person name="Dossat C."/>
            <person name="Land M.L."/>
            <person name="Broussolle V."/>
            <person name="Brillard J."/>
            <person name="Guinebretiere M.-H."/>
            <person name="Sanchis V."/>
            <person name="Nguen-the C."/>
            <person name="Lereclus D."/>
            <person name="Richardson P."/>
            <person name="Wincker P."/>
            <person name="Weissenbach J."/>
            <person name="Ehrlich S.D."/>
            <person name="Sorokin A."/>
        </authorList>
    </citation>
    <scope>NUCLEOTIDE SEQUENCE [LARGE SCALE GENOMIC DNA]</scope>
    <source>
        <strain>DSM 22905 / CIP 110041 / 391-98 / NVH 391-98</strain>
    </source>
</reference>
<gene>
    <name evidence="1" type="primary">rpsU</name>
    <name type="ordered locus">Bcer98_3035</name>
</gene>
<accession>A7GT03</accession>
<proteinExistence type="inferred from homology"/>
<protein>
    <recommendedName>
        <fullName evidence="1">Small ribosomal subunit protein bS21</fullName>
    </recommendedName>
    <alternativeName>
        <fullName evidence="2">30S ribosomal protein S21</fullName>
    </alternativeName>
</protein>
<name>RS21_BACCN</name>
<feature type="chain" id="PRO_1000079396" description="Small ribosomal subunit protein bS21">
    <location>
        <begin position="1"/>
        <end position="57"/>
    </location>
</feature>